<reference key="1">
    <citation type="journal article" date="1998" name="Virus Genes">
        <title>Nucleotide sequence of the 4.3 kbp BamHI-N fragment of fowlpox virus FP9.</title>
        <authorList>
            <person name="Pollitt E."/>
            <person name="Skinner M.A."/>
            <person name="Heaphy S."/>
        </authorList>
    </citation>
    <scope>NUCLEOTIDE SEQUENCE [GENOMIC DNA]</scope>
    <source>
        <strain>FP-9 / Isolate HP-440</strain>
    </source>
</reference>
<reference key="2">
    <citation type="journal article" date="2000" name="J. Virol.">
        <title>The genome of fowlpox virus.</title>
        <authorList>
            <person name="Afonso C.L."/>
            <person name="Tulman E.R."/>
            <person name="Lu Z."/>
            <person name="Zsak L."/>
            <person name="Kutish G.F."/>
            <person name="Rock D.L."/>
        </authorList>
    </citation>
    <scope>NUCLEOTIDE SEQUENCE [LARGE SCALE GENOMIC DNA]</scope>
</reference>
<proteinExistence type="evidence at transcript level"/>
<evidence type="ECO:0000250" key="1"/>
<evidence type="ECO:0000305" key="2"/>
<organism>
    <name type="scientific">Fowlpox virus (strain NVSL)</name>
    <name type="common">FPV</name>
    <dbReference type="NCBI Taxonomy" id="928301"/>
    <lineage>
        <taxon>Viruses</taxon>
        <taxon>Varidnaviria</taxon>
        <taxon>Bamfordvirae</taxon>
        <taxon>Nucleocytoviricota</taxon>
        <taxon>Pokkesviricetes</taxon>
        <taxon>Chitovirales</taxon>
        <taxon>Poxviridae</taxon>
        <taxon>Chordopoxvirinae</taxon>
        <taxon>Avipoxvirus</taxon>
        <taxon>Fowlpox virus</taxon>
    </lineage>
</organism>
<keyword id="KW-0426">Late protein</keyword>
<keyword id="KW-1185">Reference proteome</keyword>
<keyword id="KW-0946">Virion</keyword>
<protein>
    <recommendedName>
        <fullName>Protein E11 homolog</fullName>
    </recommendedName>
</protein>
<sequence length="131" mass="15321">MELVNILLESESERVKLYYDIPPKKSLRTKCEVDRAVKYFISVIKKYIKLKESTFYVVVKDTTLFTYKYDKGELTPVDNTYYTFSKELASTDYSSSEITSICFTITDDMSISVKPKTGYIVKVRSDNSRYY</sequence>
<organismHost>
    <name type="scientific">Vertebrata</name>
    <dbReference type="NCBI Taxonomy" id="7742"/>
</organismHost>
<comment type="subcellular location">
    <subcellularLocation>
        <location evidence="1">Virion</location>
    </subcellularLocation>
    <text evidence="1">Found in the core of mature virions (MV).</text>
</comment>
<comment type="induction">
    <text>Expressed in the late phase of the viral replicative cycle.</text>
</comment>
<comment type="similarity">
    <text evidence="2">Belongs to the chordopoxvirinae E11 family.</text>
</comment>
<accession>Q9J5C8</accession>
<accession>O72894</accession>
<gene>
    <name type="ordered locus">FPV092</name>
    <name type="ORF">FPE11L</name>
</gene>
<feature type="chain" id="PRO_0000099471" description="Protein E11 homolog">
    <location>
        <begin position="1"/>
        <end position="131"/>
    </location>
</feature>
<feature type="sequence conflict" description="In Ref. 1; CAA11287." evidence="2" ref="1">
    <original>S</original>
    <variation>T</variation>
    <location>
        <position position="94"/>
    </location>
</feature>
<name>E11_FOWPN</name>
<dbReference type="EMBL" id="AJ223385">
    <property type="protein sequence ID" value="CAA11287.1"/>
    <property type="molecule type" value="Genomic_DNA"/>
</dbReference>
<dbReference type="EMBL" id="AF198100">
    <property type="protein sequence ID" value="AAF44436.1"/>
    <property type="molecule type" value="Genomic_DNA"/>
</dbReference>
<dbReference type="RefSeq" id="NP_039055.1">
    <property type="nucleotide sequence ID" value="NC_002188.1"/>
</dbReference>
<dbReference type="SMR" id="Q9J5C8"/>
<dbReference type="GeneID" id="1486640"/>
<dbReference type="KEGG" id="vg:1486640"/>
<dbReference type="Proteomes" id="UP000008597">
    <property type="component" value="Segment"/>
</dbReference>
<dbReference type="GO" id="GO:0044423">
    <property type="term" value="C:virion component"/>
    <property type="evidence" value="ECO:0007669"/>
    <property type="project" value="UniProtKB-KW"/>
</dbReference>
<dbReference type="InterPro" id="IPR009201">
    <property type="entry name" value="Virion_core"/>
</dbReference>
<dbReference type="Pfam" id="PF06138">
    <property type="entry name" value="Chordopox_E11"/>
    <property type="match status" value="1"/>
</dbReference>
<dbReference type="PIRSF" id="PIRSF015797">
    <property type="entry name" value="Virion_core"/>
    <property type="match status" value="1"/>
</dbReference>